<sequence length="103" mass="11784">MANQKIRIRLKAFDYRLIDQSAQEIVETAKRTGAVVRGPVPLPTRKQRFDILRSPHVNKASRDQLEIRTHLRLMDIVDPTDKTVDALMKLDLPAGVDVEIKLQ</sequence>
<dbReference type="EMBL" id="CP000089">
    <property type="protein sequence ID" value="AAZ45077.1"/>
    <property type="molecule type" value="Genomic_DNA"/>
</dbReference>
<dbReference type="SMR" id="Q47JA4"/>
<dbReference type="STRING" id="159087.Daro_0318"/>
<dbReference type="KEGG" id="dar:Daro_0318"/>
<dbReference type="eggNOG" id="COG0051">
    <property type="taxonomic scope" value="Bacteria"/>
</dbReference>
<dbReference type="HOGENOM" id="CLU_122625_1_3_4"/>
<dbReference type="OrthoDB" id="9804464at2"/>
<dbReference type="GO" id="GO:1990904">
    <property type="term" value="C:ribonucleoprotein complex"/>
    <property type="evidence" value="ECO:0007669"/>
    <property type="project" value="UniProtKB-KW"/>
</dbReference>
<dbReference type="GO" id="GO:0005840">
    <property type="term" value="C:ribosome"/>
    <property type="evidence" value="ECO:0007669"/>
    <property type="project" value="UniProtKB-KW"/>
</dbReference>
<dbReference type="GO" id="GO:0003735">
    <property type="term" value="F:structural constituent of ribosome"/>
    <property type="evidence" value="ECO:0007669"/>
    <property type="project" value="InterPro"/>
</dbReference>
<dbReference type="GO" id="GO:0000049">
    <property type="term" value="F:tRNA binding"/>
    <property type="evidence" value="ECO:0007669"/>
    <property type="project" value="UniProtKB-UniRule"/>
</dbReference>
<dbReference type="GO" id="GO:0006412">
    <property type="term" value="P:translation"/>
    <property type="evidence" value="ECO:0007669"/>
    <property type="project" value="UniProtKB-UniRule"/>
</dbReference>
<dbReference type="FunFam" id="3.30.70.600:FF:000001">
    <property type="entry name" value="30S ribosomal protein S10"/>
    <property type="match status" value="1"/>
</dbReference>
<dbReference type="Gene3D" id="3.30.70.600">
    <property type="entry name" value="Ribosomal protein S10 domain"/>
    <property type="match status" value="1"/>
</dbReference>
<dbReference type="HAMAP" id="MF_00508">
    <property type="entry name" value="Ribosomal_uS10"/>
    <property type="match status" value="1"/>
</dbReference>
<dbReference type="InterPro" id="IPR001848">
    <property type="entry name" value="Ribosomal_uS10"/>
</dbReference>
<dbReference type="InterPro" id="IPR018268">
    <property type="entry name" value="Ribosomal_uS10_CS"/>
</dbReference>
<dbReference type="InterPro" id="IPR027486">
    <property type="entry name" value="Ribosomal_uS10_dom"/>
</dbReference>
<dbReference type="InterPro" id="IPR036838">
    <property type="entry name" value="Ribosomal_uS10_dom_sf"/>
</dbReference>
<dbReference type="NCBIfam" id="NF001861">
    <property type="entry name" value="PRK00596.1"/>
    <property type="match status" value="1"/>
</dbReference>
<dbReference type="NCBIfam" id="TIGR01049">
    <property type="entry name" value="rpsJ_bact"/>
    <property type="match status" value="1"/>
</dbReference>
<dbReference type="PANTHER" id="PTHR11700">
    <property type="entry name" value="30S RIBOSOMAL PROTEIN S10 FAMILY MEMBER"/>
    <property type="match status" value="1"/>
</dbReference>
<dbReference type="Pfam" id="PF00338">
    <property type="entry name" value="Ribosomal_S10"/>
    <property type="match status" value="1"/>
</dbReference>
<dbReference type="PRINTS" id="PR00971">
    <property type="entry name" value="RIBOSOMALS10"/>
</dbReference>
<dbReference type="SMART" id="SM01403">
    <property type="entry name" value="Ribosomal_S10"/>
    <property type="match status" value="1"/>
</dbReference>
<dbReference type="SUPFAM" id="SSF54999">
    <property type="entry name" value="Ribosomal protein S10"/>
    <property type="match status" value="1"/>
</dbReference>
<dbReference type="PROSITE" id="PS00361">
    <property type="entry name" value="RIBOSOMAL_S10"/>
    <property type="match status" value="1"/>
</dbReference>
<proteinExistence type="inferred from homology"/>
<name>RS10_DECAR</name>
<protein>
    <recommendedName>
        <fullName evidence="1">Small ribosomal subunit protein uS10</fullName>
    </recommendedName>
    <alternativeName>
        <fullName evidence="2">30S ribosomal protein S10</fullName>
    </alternativeName>
</protein>
<feature type="chain" id="PRO_0000237035" description="Small ribosomal subunit protein uS10">
    <location>
        <begin position="1"/>
        <end position="103"/>
    </location>
</feature>
<keyword id="KW-0687">Ribonucleoprotein</keyword>
<keyword id="KW-0689">Ribosomal protein</keyword>
<evidence type="ECO:0000255" key="1">
    <source>
        <dbReference type="HAMAP-Rule" id="MF_00508"/>
    </source>
</evidence>
<evidence type="ECO:0000305" key="2"/>
<reference key="1">
    <citation type="journal article" date="2009" name="BMC Genomics">
        <title>Metabolic analysis of the soil microbe Dechloromonas aromatica str. RCB: indications of a surprisingly complex life-style and cryptic anaerobic pathways for aromatic degradation.</title>
        <authorList>
            <person name="Salinero K.K."/>
            <person name="Keller K."/>
            <person name="Feil W.S."/>
            <person name="Feil H."/>
            <person name="Trong S."/>
            <person name="Di Bartolo G."/>
            <person name="Lapidus A."/>
        </authorList>
    </citation>
    <scope>NUCLEOTIDE SEQUENCE [LARGE SCALE GENOMIC DNA]</scope>
    <source>
        <strain>RCB</strain>
    </source>
</reference>
<organism>
    <name type="scientific">Dechloromonas aromatica (strain RCB)</name>
    <dbReference type="NCBI Taxonomy" id="159087"/>
    <lineage>
        <taxon>Bacteria</taxon>
        <taxon>Pseudomonadati</taxon>
        <taxon>Pseudomonadota</taxon>
        <taxon>Betaproteobacteria</taxon>
        <taxon>Rhodocyclales</taxon>
        <taxon>Azonexaceae</taxon>
        <taxon>Dechloromonas</taxon>
    </lineage>
</organism>
<gene>
    <name evidence="1" type="primary">rpsJ</name>
    <name type="ordered locus">Daro_0318</name>
</gene>
<accession>Q47JA4</accession>
<comment type="function">
    <text evidence="1">Involved in the binding of tRNA to the ribosomes.</text>
</comment>
<comment type="subunit">
    <text evidence="1">Part of the 30S ribosomal subunit.</text>
</comment>
<comment type="similarity">
    <text evidence="1">Belongs to the universal ribosomal protein uS10 family.</text>
</comment>